<feature type="signal peptide" evidence="1">
    <location>
        <begin position="1"/>
        <end position="23"/>
    </location>
</feature>
<feature type="chain" id="PRO_0000009179" description="CFA/I fimbrial subunit B">
    <location>
        <begin position="24"/>
        <end position="170"/>
    </location>
</feature>
<feature type="strand" evidence="3">
    <location>
        <begin position="25"/>
        <end position="34"/>
    </location>
</feature>
<feature type="strand" evidence="3">
    <location>
        <begin position="36"/>
        <end position="42"/>
    </location>
</feature>
<feature type="strand" evidence="3">
    <location>
        <begin position="50"/>
        <end position="57"/>
    </location>
</feature>
<feature type="turn" evidence="3">
    <location>
        <begin position="58"/>
        <end position="61"/>
    </location>
</feature>
<feature type="strand" evidence="3">
    <location>
        <begin position="66"/>
        <end position="75"/>
    </location>
</feature>
<feature type="strand" evidence="3">
    <location>
        <begin position="81"/>
        <end position="87"/>
    </location>
</feature>
<feature type="strand" evidence="3">
    <location>
        <begin position="90"/>
        <end position="95"/>
    </location>
</feature>
<feature type="strand" evidence="3">
    <location>
        <begin position="100"/>
        <end position="107"/>
    </location>
</feature>
<feature type="strand" evidence="3">
    <location>
        <begin position="117"/>
        <end position="119"/>
    </location>
</feature>
<feature type="helix" evidence="3">
    <location>
        <begin position="121"/>
        <end position="124"/>
    </location>
</feature>
<feature type="turn" evidence="3">
    <location>
        <begin position="125"/>
        <end position="127"/>
    </location>
</feature>
<feature type="strand" evidence="3">
    <location>
        <begin position="128"/>
        <end position="131"/>
    </location>
</feature>
<feature type="strand" evidence="3">
    <location>
        <begin position="138"/>
        <end position="144"/>
    </location>
</feature>
<feature type="strand" evidence="3">
    <location>
        <begin position="155"/>
        <end position="168"/>
    </location>
</feature>
<evidence type="ECO:0000250" key="1"/>
<evidence type="ECO:0000305" key="2"/>
<evidence type="ECO:0007829" key="3">
    <source>
        <dbReference type="PDB" id="8EHR"/>
    </source>
</evidence>
<sequence length="170" mass="17433">MKFKKTIGAMALTTMFVAVSASAVEKNITVTASVDPAIDLLQADGNALPSAVKLAYSPASKTFESYRVMTQVHTNDATKKVIVKLADTPQLTDVLNSTVQMPISVSWGGQVLSTTAKEFEAAALGYSASGVNGVSSSQELVISAAPKTAGTAPTAGNYSGVVSLVMTLGS</sequence>
<organism>
    <name type="scientific">Escherichia coli</name>
    <dbReference type="NCBI Taxonomy" id="562"/>
    <lineage>
        <taxon>Bacteria</taxon>
        <taxon>Pseudomonadati</taxon>
        <taxon>Pseudomonadota</taxon>
        <taxon>Gammaproteobacteria</taxon>
        <taxon>Enterobacterales</taxon>
        <taxon>Enterobacteriaceae</taxon>
        <taxon>Escherichia</taxon>
    </lineage>
</organism>
<reference key="1">
    <citation type="journal article" date="1989" name="Microb. Pathog.">
        <title>The nucleotide sequence of the first two genes of the CFA/I fimbrial operon of human enterotoxigenic Escherichia coli.</title>
        <authorList>
            <person name="Hamers A.M."/>
            <person name="Pel H.J."/>
            <person name="Willshaw G.A."/>
            <person name="Kusters J.G."/>
            <person name="van der Zeijst B.A.M."/>
            <person name="Gaastra W."/>
        </authorList>
    </citation>
    <scope>NUCLEOTIDE SEQUENCE [GENOMIC DNA]</scope>
    <source>
        <strain>O78:H12 / E7473 / ETEC</strain>
    </source>
</reference>
<geneLocation type="plasmid">
    <name>NTP513</name>
</geneLocation>
<dbReference type="EMBL" id="M55661">
    <property type="protein sequence ID" value="AAC41415.1"/>
    <property type="molecule type" value="Genomic_DNA"/>
</dbReference>
<dbReference type="RefSeq" id="WP_000669509.1">
    <property type="nucleotide sequence ID" value="NZ_UEMW01000053.1"/>
</dbReference>
<dbReference type="PDB" id="6NRV">
    <property type="method" value="EM"/>
    <property type="resolution" value="4.00 A"/>
    <property type="chains" value="A/B/C/D/E/F/G/H/I/J/K/L/M=24-169"/>
</dbReference>
<dbReference type="PDB" id="8EHR">
    <property type="method" value="EM"/>
    <property type="resolution" value="3.20 A"/>
    <property type="chains" value="A/B/C/D/E/F/G=24-169"/>
</dbReference>
<dbReference type="PDBsum" id="6NRV"/>
<dbReference type="PDBsum" id="8EHR"/>
<dbReference type="EMDB" id="EMD-0497"/>
<dbReference type="EMDB" id="EMD-28150"/>
<dbReference type="SMR" id="P0CK93"/>
<dbReference type="GO" id="GO:0009289">
    <property type="term" value="C:pilus"/>
    <property type="evidence" value="ECO:0007669"/>
    <property type="project" value="UniProtKB-SubCell"/>
</dbReference>
<dbReference type="Gene3D" id="2.60.40.2040">
    <property type="entry name" value="CFA/I fimbrial subunit E, pilin domain"/>
    <property type="match status" value="2"/>
</dbReference>
<dbReference type="InterPro" id="IPR007540">
    <property type="entry name" value="Fimbrial_CS1-type"/>
</dbReference>
<dbReference type="Pfam" id="PF04449">
    <property type="entry name" value="Fimbrial_CS1"/>
    <property type="match status" value="1"/>
</dbReference>
<gene>
    <name type="primary">cfaB</name>
</gene>
<accession>P0CK93</accession>
<accession>P02971</accession>
<keyword id="KW-0002">3D-structure</keyword>
<keyword id="KW-0281">Fimbrium</keyword>
<keyword id="KW-0614">Plasmid</keyword>
<keyword id="KW-0732">Signal</keyword>
<proteinExistence type="evidence at protein level"/>
<comment type="function">
    <text>Fimbriae (also called pili), polar filaments radiating from the surface of the bacterium to a length of 0.5-1.5 micrometers and numbering 100-300 per cell, enable bacteria to colonize the epithelium of specific host organs.</text>
</comment>
<comment type="subunit">
    <text>CFA/I fimbriae are rather rigid, thread-like filaments of 0.5-1 micrometer, with an apparent axial hole, and a diameter of 7 nanometers. A single CFA/I fimbria consists of about 100 identical protein subunits.</text>
</comment>
<comment type="subcellular location">
    <subcellularLocation>
        <location>Fimbrium</location>
    </subcellularLocation>
</comment>
<comment type="induction">
    <text>CFA/I fimbriae are only expressed in the presence of the positive regulator CfaD.</text>
</comment>
<comment type="similarity">
    <text evidence="2">Belongs to the fimbrial CS1 protein family.</text>
</comment>
<name>FMC1_ECOLX</name>
<protein>
    <recommendedName>
        <fullName>CFA/I fimbrial subunit B</fullName>
    </recommendedName>
    <alternativeName>
        <fullName>CFA/I antigen</fullName>
    </alternativeName>
    <alternativeName>
        <fullName>CFA/I pilin</fullName>
    </alternativeName>
    <alternativeName>
        <fullName>Colonization factor antigen I subunit B</fullName>
    </alternativeName>
</protein>